<accession>Q641W4</accession>
<dbReference type="EMBL" id="BC082110">
    <property type="protein sequence ID" value="AAH82110.1"/>
    <property type="molecule type" value="mRNA"/>
</dbReference>
<dbReference type="RefSeq" id="NP_446238.1">
    <property type="nucleotide sequence ID" value="NM_053786.1"/>
</dbReference>
<dbReference type="SMR" id="Q641W4"/>
<dbReference type="FunCoup" id="Q641W4">
    <property type="interactions" value="3045"/>
</dbReference>
<dbReference type="STRING" id="10116.ENSRNOP00000001989"/>
<dbReference type="PhosphoSitePlus" id="Q641W4"/>
<dbReference type="jPOST" id="Q641W4"/>
<dbReference type="PaxDb" id="10116-ENSRNOP00000001989"/>
<dbReference type="Ensembl" id="ENSRNOT00000094282.1">
    <property type="protein sequence ID" value="ENSRNOP00000077503.1"/>
    <property type="gene ID" value="ENSRNOG00000001457.6"/>
</dbReference>
<dbReference type="GeneID" id="116468"/>
<dbReference type="KEGG" id="rno:116468"/>
<dbReference type="UCSC" id="RGD:621198">
    <property type="organism name" value="rat"/>
</dbReference>
<dbReference type="AGR" id="RGD:621198"/>
<dbReference type="CTD" id="5982"/>
<dbReference type="RGD" id="621198">
    <property type="gene designation" value="Rfc2"/>
</dbReference>
<dbReference type="eggNOG" id="KOG0991">
    <property type="taxonomic scope" value="Eukaryota"/>
</dbReference>
<dbReference type="GeneTree" id="ENSGT00550000075050"/>
<dbReference type="HOGENOM" id="CLU_042324_0_1_1"/>
<dbReference type="InParanoid" id="Q641W4"/>
<dbReference type="OMA" id="SCNYSSQ"/>
<dbReference type="OrthoDB" id="4199794at2759"/>
<dbReference type="PhylomeDB" id="Q641W4"/>
<dbReference type="TreeFam" id="TF300585"/>
<dbReference type="Reactome" id="R-RNO-110312">
    <property type="pathway name" value="Translesion synthesis by REV1"/>
</dbReference>
<dbReference type="Reactome" id="R-RNO-110314">
    <property type="pathway name" value="Recognition of DNA damage by PCNA-containing replication complex"/>
</dbReference>
<dbReference type="Reactome" id="R-RNO-110320">
    <property type="pathway name" value="Translesion Synthesis by POLH"/>
</dbReference>
<dbReference type="Reactome" id="R-RNO-174411">
    <property type="pathway name" value="Polymerase switching on the C-strand of the telomere"/>
</dbReference>
<dbReference type="Reactome" id="R-RNO-176187">
    <property type="pathway name" value="Activation of ATR in response to replication stress"/>
</dbReference>
<dbReference type="Reactome" id="R-RNO-5651801">
    <property type="pathway name" value="PCNA-Dependent Long Patch Base Excision Repair"/>
</dbReference>
<dbReference type="Reactome" id="R-RNO-5655862">
    <property type="pathway name" value="Translesion synthesis by POLK"/>
</dbReference>
<dbReference type="Reactome" id="R-RNO-5656121">
    <property type="pathway name" value="Translesion synthesis by POLI"/>
</dbReference>
<dbReference type="Reactome" id="R-RNO-5656169">
    <property type="pathway name" value="Termination of translesion DNA synthesis"/>
</dbReference>
<dbReference type="Reactome" id="R-RNO-5685938">
    <property type="pathway name" value="HDR through Single Strand Annealing (SSA)"/>
</dbReference>
<dbReference type="Reactome" id="R-RNO-5685942">
    <property type="pathway name" value="HDR through Homologous Recombination (HRR)"/>
</dbReference>
<dbReference type="Reactome" id="R-RNO-5693607">
    <property type="pathway name" value="Processing of DNA double-strand break ends"/>
</dbReference>
<dbReference type="Reactome" id="R-RNO-5696397">
    <property type="pathway name" value="Gap-filling DNA repair synthesis and ligation in GG-NER"/>
</dbReference>
<dbReference type="Reactome" id="R-RNO-5696400">
    <property type="pathway name" value="Dual Incision in GG-NER"/>
</dbReference>
<dbReference type="Reactome" id="R-RNO-6782135">
    <property type="pathway name" value="Dual incision in TC-NER"/>
</dbReference>
<dbReference type="Reactome" id="R-RNO-6782210">
    <property type="pathway name" value="Gap-filling DNA repair synthesis and ligation in TC-NER"/>
</dbReference>
<dbReference type="Reactome" id="R-RNO-6804756">
    <property type="pathway name" value="Regulation of TP53 Activity through Phosphorylation"/>
</dbReference>
<dbReference type="Reactome" id="R-RNO-69091">
    <property type="pathway name" value="Polymerase switching"/>
</dbReference>
<dbReference type="Reactome" id="R-RNO-69473">
    <property type="pathway name" value="G2/M DNA damage checkpoint"/>
</dbReference>
<dbReference type="PRO" id="PR:Q641W4"/>
<dbReference type="Proteomes" id="UP000002494">
    <property type="component" value="Chromosome 12"/>
</dbReference>
<dbReference type="Bgee" id="ENSRNOG00000001457">
    <property type="expression patterns" value="Expressed in thymus and 20 other cell types or tissues"/>
</dbReference>
<dbReference type="GO" id="GO:0031390">
    <property type="term" value="C:Ctf18 RFC-like complex"/>
    <property type="evidence" value="ECO:0000250"/>
    <property type="project" value="UniProtKB"/>
</dbReference>
<dbReference type="GO" id="GO:0005663">
    <property type="term" value="C:DNA replication factor C complex"/>
    <property type="evidence" value="ECO:0000266"/>
    <property type="project" value="RGD"/>
</dbReference>
<dbReference type="GO" id="GO:0005634">
    <property type="term" value="C:nucleus"/>
    <property type="evidence" value="ECO:0000318"/>
    <property type="project" value="GO_Central"/>
</dbReference>
<dbReference type="GO" id="GO:0005524">
    <property type="term" value="F:ATP binding"/>
    <property type="evidence" value="ECO:0007669"/>
    <property type="project" value="UniProtKB-KW"/>
</dbReference>
<dbReference type="GO" id="GO:0016887">
    <property type="term" value="F:ATP hydrolysis activity"/>
    <property type="evidence" value="ECO:0007669"/>
    <property type="project" value="InterPro"/>
</dbReference>
<dbReference type="GO" id="GO:0003677">
    <property type="term" value="F:DNA binding"/>
    <property type="evidence" value="ECO:0007669"/>
    <property type="project" value="InterPro"/>
</dbReference>
<dbReference type="GO" id="GO:0003689">
    <property type="term" value="F:DNA clamp loader activity"/>
    <property type="evidence" value="ECO:0007669"/>
    <property type="project" value="Ensembl"/>
</dbReference>
<dbReference type="GO" id="GO:0019899">
    <property type="term" value="F:enzyme binding"/>
    <property type="evidence" value="ECO:0000266"/>
    <property type="project" value="RGD"/>
</dbReference>
<dbReference type="GO" id="GO:0017116">
    <property type="term" value="F:single-stranded DNA helicase activity"/>
    <property type="evidence" value="ECO:0007669"/>
    <property type="project" value="Ensembl"/>
</dbReference>
<dbReference type="GO" id="GO:0006281">
    <property type="term" value="P:DNA repair"/>
    <property type="evidence" value="ECO:0000318"/>
    <property type="project" value="GO_Central"/>
</dbReference>
<dbReference type="GO" id="GO:0006261">
    <property type="term" value="P:DNA-templated DNA replication"/>
    <property type="evidence" value="ECO:0000266"/>
    <property type="project" value="RGD"/>
</dbReference>
<dbReference type="GO" id="GO:1900264">
    <property type="term" value="P:positive regulation of DNA-directed DNA polymerase activity"/>
    <property type="evidence" value="ECO:0000250"/>
    <property type="project" value="UniProtKB"/>
</dbReference>
<dbReference type="CDD" id="cd00009">
    <property type="entry name" value="AAA"/>
    <property type="match status" value="1"/>
</dbReference>
<dbReference type="CDD" id="cd18140">
    <property type="entry name" value="HLD_clamp_RFC"/>
    <property type="match status" value="1"/>
</dbReference>
<dbReference type="FunFam" id="1.20.272.10:FF:000006">
    <property type="entry name" value="Replication factor C subunit 2"/>
    <property type="match status" value="1"/>
</dbReference>
<dbReference type="FunFam" id="1.10.8.60:FF:000012">
    <property type="entry name" value="Replication factor C subunit 4"/>
    <property type="match status" value="1"/>
</dbReference>
<dbReference type="FunFam" id="3.40.50.300:FF:000107">
    <property type="entry name" value="Replication factor C subunit 4"/>
    <property type="match status" value="1"/>
</dbReference>
<dbReference type="Gene3D" id="1.10.8.60">
    <property type="match status" value="1"/>
</dbReference>
<dbReference type="Gene3D" id="1.20.272.10">
    <property type="match status" value="1"/>
</dbReference>
<dbReference type="Gene3D" id="3.40.50.300">
    <property type="entry name" value="P-loop containing nucleotide triphosphate hydrolases"/>
    <property type="match status" value="1"/>
</dbReference>
<dbReference type="InterPro" id="IPR003593">
    <property type="entry name" value="AAA+_ATPase"/>
</dbReference>
<dbReference type="InterPro" id="IPR003959">
    <property type="entry name" value="ATPase_AAA_core"/>
</dbReference>
<dbReference type="InterPro" id="IPR008921">
    <property type="entry name" value="DNA_pol3_clamp-load_cplx_C"/>
</dbReference>
<dbReference type="InterPro" id="IPR050238">
    <property type="entry name" value="DNA_Rep/Repair_Clamp_Loader"/>
</dbReference>
<dbReference type="InterPro" id="IPR027417">
    <property type="entry name" value="P-loop_NTPase"/>
</dbReference>
<dbReference type="InterPro" id="IPR013748">
    <property type="entry name" value="Rep_factorC_C"/>
</dbReference>
<dbReference type="InterPro" id="IPR047854">
    <property type="entry name" value="RFC_lid"/>
</dbReference>
<dbReference type="NCBIfam" id="NF001679">
    <property type="entry name" value="PRK00440.1"/>
    <property type="match status" value="1"/>
</dbReference>
<dbReference type="PANTHER" id="PTHR11669">
    <property type="entry name" value="REPLICATION FACTOR C / DNA POLYMERASE III GAMMA-TAU SUBUNIT"/>
    <property type="match status" value="1"/>
</dbReference>
<dbReference type="PANTHER" id="PTHR11669:SF5">
    <property type="entry name" value="REPLICATION FACTOR C SUBUNIT 2"/>
    <property type="match status" value="1"/>
</dbReference>
<dbReference type="Pfam" id="PF00004">
    <property type="entry name" value="AAA"/>
    <property type="match status" value="1"/>
</dbReference>
<dbReference type="Pfam" id="PF08542">
    <property type="entry name" value="Rep_fac_C"/>
    <property type="match status" value="1"/>
</dbReference>
<dbReference type="SMART" id="SM00382">
    <property type="entry name" value="AAA"/>
    <property type="match status" value="1"/>
</dbReference>
<dbReference type="SUPFAM" id="SSF52540">
    <property type="entry name" value="P-loop containing nucleoside triphosphate hydrolases"/>
    <property type="match status" value="1"/>
</dbReference>
<dbReference type="SUPFAM" id="SSF48019">
    <property type="entry name" value="post-AAA+ oligomerization domain-like"/>
    <property type="match status" value="1"/>
</dbReference>
<feature type="chain" id="PRO_0000330462" description="Replication factor C subunit 2">
    <location>
        <begin position="1"/>
        <end position="349"/>
    </location>
</feature>
<feature type="region of interest" description="Disordered" evidence="3">
    <location>
        <begin position="1"/>
        <end position="27"/>
    </location>
</feature>
<feature type="compositionally biased region" description="Polar residues" evidence="3">
    <location>
        <begin position="1"/>
        <end position="26"/>
    </location>
</feature>
<feature type="binding site" evidence="2">
    <location>
        <begin position="71"/>
        <end position="78"/>
    </location>
    <ligand>
        <name>ATP</name>
        <dbReference type="ChEBI" id="CHEBI:30616"/>
    </ligand>
</feature>
<feature type="modified residue" description="N-acetylmethionine" evidence="1">
    <location>
        <position position="1"/>
    </location>
</feature>
<feature type="modified residue" description="N6-acetyllysine" evidence="1">
    <location>
        <position position="158"/>
    </location>
</feature>
<feature type="modified residue" description="N6-acetyllysine" evidence="1">
    <location>
        <position position="299"/>
    </location>
</feature>
<proteinExistence type="evidence at transcript level"/>
<reference key="1">
    <citation type="journal article" date="2004" name="Genome Res.">
        <title>The status, quality, and expansion of the NIH full-length cDNA project: the Mammalian Gene Collection (MGC).</title>
        <authorList>
            <consortium name="The MGC Project Team"/>
        </authorList>
    </citation>
    <scope>NUCLEOTIDE SEQUENCE [LARGE SCALE MRNA]</scope>
    <source>
        <tissue>Testis</tissue>
    </source>
</reference>
<organism>
    <name type="scientific">Rattus norvegicus</name>
    <name type="common">Rat</name>
    <dbReference type="NCBI Taxonomy" id="10116"/>
    <lineage>
        <taxon>Eukaryota</taxon>
        <taxon>Metazoa</taxon>
        <taxon>Chordata</taxon>
        <taxon>Craniata</taxon>
        <taxon>Vertebrata</taxon>
        <taxon>Euteleostomi</taxon>
        <taxon>Mammalia</taxon>
        <taxon>Eutheria</taxon>
        <taxon>Euarchontoglires</taxon>
        <taxon>Glires</taxon>
        <taxon>Rodentia</taxon>
        <taxon>Myomorpha</taxon>
        <taxon>Muroidea</taxon>
        <taxon>Muridae</taxon>
        <taxon>Murinae</taxon>
        <taxon>Rattus</taxon>
    </lineage>
</organism>
<sequence length="349" mass="38657">MEVQESGSGSAESGTQEPSPVPSKTTGHYELPWVEKYRPVKLNEIVGNEDTVSRLEVFAREGNVPNIIIAGPPGTGKTTSILCLARALLGPALKDAVLELNASNDRGIDVVRNKIKMFAQQKVTLPKGRHKIIILDEADSMTDGAQQALRRTMEIYSKTTRFALACNASDKIIEPIQSRCAVLRYTKLTDAQVLSRLMNVIEKEKVPYTDDGLEAIIFTAQGDMRQALNNLQSTFSGFGYINSENVFKVCDEPHPLLVKEMIQHCVDANIDEAYKILAHLWHLGYSPEDVIGNIFRVCKTFPMAEYLKLEFIKEIGYTHMKVAEGVNSLLQMAGLLARLCQKTMAPVAS</sequence>
<comment type="function">
    <text evidence="1">Subunit of the replication factor C (RFC) complex which acts during elongation of primed DNA templates by DNA polymerases delta and epsilon, and is necessary for ATP-dependent loading of proliferating cell nuclear antigen (PCNA) onto primed DNA (By similarity). This subunit binds ATP (By similarity).</text>
</comment>
<comment type="subunit">
    <text evidence="1">Subunit of the RFC complex, an heteropentameric complex consisting of a large subunit RFC1 and four small subunits RFC2, RFC3, RFC4 and RFC5; the RFC complex interacts with PCNA. Forms an heterotetrameric complex with RFC3, RFC4 and RFC5; this complex has ATPase activity but is not stimulated by PCNA. The heterotetramer of subunits RFC2, RFC3, RFC4 and RFC5 interacts with RAD17. RFC2 also interacts with PRKAR1A; the complex may be involved in cell survival. Interacts with DDX11.</text>
</comment>
<comment type="subcellular location">
    <subcellularLocation>
        <location evidence="4">Nucleus</location>
    </subcellularLocation>
</comment>
<comment type="similarity">
    <text evidence="4">Belongs to the activator 1 small subunits family.</text>
</comment>
<evidence type="ECO:0000250" key="1">
    <source>
        <dbReference type="UniProtKB" id="P35250"/>
    </source>
</evidence>
<evidence type="ECO:0000255" key="2"/>
<evidence type="ECO:0000256" key="3">
    <source>
        <dbReference type="SAM" id="MobiDB-lite"/>
    </source>
</evidence>
<evidence type="ECO:0000305" key="4"/>
<keyword id="KW-0007">Acetylation</keyword>
<keyword id="KW-0067">ATP-binding</keyword>
<keyword id="KW-0235">DNA replication</keyword>
<keyword id="KW-0547">Nucleotide-binding</keyword>
<keyword id="KW-0539">Nucleus</keyword>
<keyword id="KW-1185">Reference proteome</keyword>
<name>RFC2_RAT</name>
<gene>
    <name type="primary">Rfc2</name>
</gene>
<protein>
    <recommendedName>
        <fullName>Replication factor C subunit 2</fullName>
    </recommendedName>
    <alternativeName>
        <fullName>Activator 1 subunit C2</fullName>
    </alternativeName>
</protein>